<gene>
    <name type="primary">lacF</name>
</gene>
<dbReference type="EMBL" id="X66596">
    <property type="protein sequence ID" value="CAA47162.1"/>
    <property type="molecule type" value="Genomic_DNA"/>
</dbReference>
<dbReference type="PIR" id="S25248">
    <property type="entry name" value="MMAGCF"/>
</dbReference>
<dbReference type="SMR" id="P29823"/>
<dbReference type="TCDB" id="3.A.1.1.4">
    <property type="family name" value="the atp-binding cassette (abc) superfamily"/>
</dbReference>
<dbReference type="GO" id="GO:0005886">
    <property type="term" value="C:plasma membrane"/>
    <property type="evidence" value="ECO:0007669"/>
    <property type="project" value="UniProtKB-SubCell"/>
</dbReference>
<dbReference type="GO" id="GO:0055085">
    <property type="term" value="P:transmembrane transport"/>
    <property type="evidence" value="ECO:0007669"/>
    <property type="project" value="InterPro"/>
</dbReference>
<dbReference type="CDD" id="cd06261">
    <property type="entry name" value="TM_PBP2"/>
    <property type="match status" value="1"/>
</dbReference>
<dbReference type="Gene3D" id="1.10.3720.10">
    <property type="entry name" value="MetI-like"/>
    <property type="match status" value="1"/>
</dbReference>
<dbReference type="InterPro" id="IPR051393">
    <property type="entry name" value="ABC_transporter_permease"/>
</dbReference>
<dbReference type="InterPro" id="IPR000515">
    <property type="entry name" value="MetI-like"/>
</dbReference>
<dbReference type="InterPro" id="IPR035906">
    <property type="entry name" value="MetI-like_sf"/>
</dbReference>
<dbReference type="PANTHER" id="PTHR30193">
    <property type="entry name" value="ABC TRANSPORTER PERMEASE PROTEIN"/>
    <property type="match status" value="1"/>
</dbReference>
<dbReference type="PANTHER" id="PTHR30193:SF37">
    <property type="entry name" value="INNER MEMBRANE ABC TRANSPORTER PERMEASE PROTEIN YCJO"/>
    <property type="match status" value="1"/>
</dbReference>
<dbReference type="Pfam" id="PF00528">
    <property type="entry name" value="BPD_transp_1"/>
    <property type="match status" value="1"/>
</dbReference>
<dbReference type="SUPFAM" id="SSF161098">
    <property type="entry name" value="MetI-like"/>
    <property type="match status" value="1"/>
</dbReference>
<dbReference type="PROSITE" id="PS50928">
    <property type="entry name" value="ABC_TM1"/>
    <property type="match status" value="1"/>
</dbReference>
<sequence length="298" mass="33618">MATTSRSSLKRYYDVNGWLFVAPAIALISVFMLYPILRSLVLSLYTGRGMMLKFSGTGNLVRLWNDPVFWQALQNTVIFFVVQVPIMITMALILAAMLNNPKLRYSGLFRTMIFLPCVSSLVAYSILFKSMFSLDGVVNNTLLAIGIIGEPIGWLTDPFWAKVLIIIAITWRWTGYNMIFYLAALQNIDRSIYEAAKIDGVPSWGRFAFLTIPMLKPVILFTTITSTIGTLQLFDEVYNFTEGTGGPANSTLTLSLYIYNLTFRFMPSFSYAATVSYVIVLMVAVLSFLQFYAARERK</sequence>
<feature type="chain" id="PRO_0000060056" description="Lactose transport system permease protein LacF">
    <location>
        <begin position="1"/>
        <end position="298"/>
    </location>
</feature>
<feature type="transmembrane region" description="Helical" evidence="1">
    <location>
        <begin position="17"/>
        <end position="37"/>
    </location>
</feature>
<feature type="transmembrane region" description="Helical" evidence="1">
    <location>
        <begin position="77"/>
        <end position="97"/>
    </location>
</feature>
<feature type="transmembrane region" description="Helical" evidence="1">
    <location>
        <begin position="112"/>
        <end position="132"/>
    </location>
</feature>
<feature type="transmembrane region" description="Helical" evidence="1">
    <location>
        <begin position="151"/>
        <end position="171"/>
    </location>
</feature>
<feature type="transmembrane region" description="Helical" evidence="1">
    <location>
        <begin position="208"/>
        <end position="228"/>
    </location>
</feature>
<feature type="transmembrane region" description="Helical" evidence="1">
    <location>
        <begin position="269"/>
        <end position="289"/>
    </location>
</feature>
<feature type="domain" description="ABC transmembrane type-1" evidence="1">
    <location>
        <begin position="73"/>
        <end position="290"/>
    </location>
</feature>
<proteinExistence type="evidence at transcript level"/>
<name>LACF_RHIRD</name>
<protein>
    <recommendedName>
        <fullName>Lactose transport system permease protein LacF</fullName>
    </recommendedName>
</protein>
<accession>P29823</accession>
<reference key="1">
    <citation type="journal article" date="1992" name="Mol. Microbiol.">
        <title>Molecular analysis of the lac operon encoding the binding-protein-dependent lactose transport system and beta-galactosidase in Agrobacterium radiobacter.</title>
        <authorList>
            <person name="Williams S.G."/>
            <person name="Greenwood J.A."/>
            <person name="Jones C.W."/>
        </authorList>
    </citation>
    <scope>NUCLEOTIDE SEQUENCE [GENOMIC DNA]</scope>
    <source>
        <strain>AR50</strain>
    </source>
</reference>
<evidence type="ECO:0000255" key="1">
    <source>
        <dbReference type="PROSITE-ProRule" id="PRU00441"/>
    </source>
</evidence>
<evidence type="ECO:0000305" key="2"/>
<organism>
    <name type="scientific">Rhizobium radiobacter</name>
    <name type="common">Agrobacterium tumefaciens</name>
    <name type="synonym">Agrobacterium radiobacter</name>
    <dbReference type="NCBI Taxonomy" id="358"/>
    <lineage>
        <taxon>Bacteria</taxon>
        <taxon>Pseudomonadati</taxon>
        <taxon>Pseudomonadota</taxon>
        <taxon>Alphaproteobacteria</taxon>
        <taxon>Hyphomicrobiales</taxon>
        <taxon>Rhizobiaceae</taxon>
        <taxon>Rhizobium/Agrobacterium group</taxon>
        <taxon>Agrobacterium</taxon>
        <taxon>Agrobacterium tumefaciens complex</taxon>
    </lineage>
</organism>
<comment type="function">
    <text>Part of the binding-protein-dependent transport system for lactose. Probably responsible for the translocation of the substrate across the membrane.</text>
</comment>
<comment type="subcellular location">
    <subcellularLocation>
        <location>Cell inner membrane</location>
        <topology>Multi-pass membrane protein</topology>
    </subcellularLocation>
</comment>
<comment type="induction">
    <text>By lactose and various galactosides, and subject to catabolite repression by glucose, galactose and succinate. In strain AR50 the expression of the lac operon is constitutive.</text>
</comment>
<comment type="similarity">
    <text evidence="2">Belongs to the binding-protein-dependent transport system permease family. MalFG subfamily.</text>
</comment>
<keyword id="KW-0997">Cell inner membrane</keyword>
<keyword id="KW-1003">Cell membrane</keyword>
<keyword id="KW-0472">Membrane</keyword>
<keyword id="KW-0762">Sugar transport</keyword>
<keyword id="KW-0812">Transmembrane</keyword>
<keyword id="KW-1133">Transmembrane helix</keyword>
<keyword id="KW-0813">Transport</keyword>